<keyword id="KW-0067">ATP-binding</keyword>
<keyword id="KW-0227">DNA damage</keyword>
<keyword id="KW-0234">DNA repair</keyword>
<keyword id="KW-0238">DNA-binding</keyword>
<keyword id="KW-0547">Nucleotide-binding</keyword>
<keyword id="KW-1185">Reference proteome</keyword>
<evidence type="ECO:0000255" key="1">
    <source>
        <dbReference type="HAMAP-Rule" id="MF_00096"/>
    </source>
</evidence>
<evidence type="ECO:0000305" key="2"/>
<proteinExistence type="inferred from homology"/>
<dbReference type="EMBL" id="CP000270">
    <property type="protein sequence ID" value="ABE31338.1"/>
    <property type="status" value="ALT_INIT"/>
    <property type="molecule type" value="Genomic_DNA"/>
</dbReference>
<dbReference type="RefSeq" id="WP_038457717.1">
    <property type="nucleotide sequence ID" value="NC_007951.1"/>
</dbReference>
<dbReference type="SMR" id="Q13X51"/>
<dbReference type="STRING" id="266265.Bxe_A1617"/>
<dbReference type="KEGG" id="bxe:Bxe_A1617"/>
<dbReference type="PATRIC" id="fig|266265.5.peg.2940"/>
<dbReference type="eggNOG" id="COG0249">
    <property type="taxonomic scope" value="Bacteria"/>
</dbReference>
<dbReference type="OrthoDB" id="9802448at2"/>
<dbReference type="Proteomes" id="UP000001817">
    <property type="component" value="Chromosome 1"/>
</dbReference>
<dbReference type="GO" id="GO:0005829">
    <property type="term" value="C:cytosol"/>
    <property type="evidence" value="ECO:0007669"/>
    <property type="project" value="TreeGrafter"/>
</dbReference>
<dbReference type="GO" id="GO:0005524">
    <property type="term" value="F:ATP binding"/>
    <property type="evidence" value="ECO:0007669"/>
    <property type="project" value="UniProtKB-UniRule"/>
</dbReference>
<dbReference type="GO" id="GO:0140664">
    <property type="term" value="F:ATP-dependent DNA damage sensor activity"/>
    <property type="evidence" value="ECO:0007669"/>
    <property type="project" value="InterPro"/>
</dbReference>
<dbReference type="GO" id="GO:0003684">
    <property type="term" value="F:damaged DNA binding"/>
    <property type="evidence" value="ECO:0007669"/>
    <property type="project" value="UniProtKB-UniRule"/>
</dbReference>
<dbReference type="GO" id="GO:0030983">
    <property type="term" value="F:mismatched DNA binding"/>
    <property type="evidence" value="ECO:0007669"/>
    <property type="project" value="InterPro"/>
</dbReference>
<dbReference type="GO" id="GO:0006298">
    <property type="term" value="P:mismatch repair"/>
    <property type="evidence" value="ECO:0007669"/>
    <property type="project" value="UniProtKB-UniRule"/>
</dbReference>
<dbReference type="CDD" id="cd03284">
    <property type="entry name" value="ABC_MutS1"/>
    <property type="match status" value="1"/>
</dbReference>
<dbReference type="FunFam" id="1.10.1420.10:FF:000001">
    <property type="entry name" value="DNA mismatch repair protein MutS"/>
    <property type="match status" value="1"/>
</dbReference>
<dbReference type="FunFam" id="3.40.1170.10:FF:000001">
    <property type="entry name" value="DNA mismatch repair protein MutS"/>
    <property type="match status" value="1"/>
</dbReference>
<dbReference type="FunFam" id="3.40.50.300:FF:000870">
    <property type="entry name" value="MutS protein homolog 4"/>
    <property type="match status" value="1"/>
</dbReference>
<dbReference type="Gene3D" id="1.10.1420.10">
    <property type="match status" value="2"/>
</dbReference>
<dbReference type="Gene3D" id="6.10.140.430">
    <property type="match status" value="1"/>
</dbReference>
<dbReference type="Gene3D" id="3.40.1170.10">
    <property type="entry name" value="DNA repair protein MutS, domain I"/>
    <property type="match status" value="1"/>
</dbReference>
<dbReference type="Gene3D" id="3.30.420.110">
    <property type="entry name" value="MutS, connector domain"/>
    <property type="match status" value="1"/>
</dbReference>
<dbReference type="Gene3D" id="3.40.50.300">
    <property type="entry name" value="P-loop containing nucleotide triphosphate hydrolases"/>
    <property type="match status" value="1"/>
</dbReference>
<dbReference type="HAMAP" id="MF_00096">
    <property type="entry name" value="MutS"/>
    <property type="match status" value="1"/>
</dbReference>
<dbReference type="InterPro" id="IPR005748">
    <property type="entry name" value="DNA_mismatch_repair_MutS"/>
</dbReference>
<dbReference type="InterPro" id="IPR007695">
    <property type="entry name" value="DNA_mismatch_repair_MutS-lik_N"/>
</dbReference>
<dbReference type="InterPro" id="IPR017261">
    <property type="entry name" value="DNA_mismatch_repair_MutS/MSH"/>
</dbReference>
<dbReference type="InterPro" id="IPR000432">
    <property type="entry name" value="DNA_mismatch_repair_MutS_C"/>
</dbReference>
<dbReference type="InterPro" id="IPR007861">
    <property type="entry name" value="DNA_mismatch_repair_MutS_clamp"/>
</dbReference>
<dbReference type="InterPro" id="IPR007696">
    <property type="entry name" value="DNA_mismatch_repair_MutS_core"/>
</dbReference>
<dbReference type="InterPro" id="IPR016151">
    <property type="entry name" value="DNA_mismatch_repair_MutS_N"/>
</dbReference>
<dbReference type="InterPro" id="IPR036187">
    <property type="entry name" value="DNA_mismatch_repair_MutS_sf"/>
</dbReference>
<dbReference type="InterPro" id="IPR007860">
    <property type="entry name" value="DNA_mmatch_repair_MutS_con_dom"/>
</dbReference>
<dbReference type="InterPro" id="IPR045076">
    <property type="entry name" value="MutS"/>
</dbReference>
<dbReference type="InterPro" id="IPR036678">
    <property type="entry name" value="MutS_con_dom_sf"/>
</dbReference>
<dbReference type="InterPro" id="IPR027417">
    <property type="entry name" value="P-loop_NTPase"/>
</dbReference>
<dbReference type="NCBIfam" id="TIGR01070">
    <property type="entry name" value="mutS1"/>
    <property type="match status" value="1"/>
</dbReference>
<dbReference type="NCBIfam" id="NF003810">
    <property type="entry name" value="PRK05399.1"/>
    <property type="match status" value="1"/>
</dbReference>
<dbReference type="PANTHER" id="PTHR11361:SF34">
    <property type="entry name" value="DNA MISMATCH REPAIR PROTEIN MSH1, MITOCHONDRIAL"/>
    <property type="match status" value="1"/>
</dbReference>
<dbReference type="PANTHER" id="PTHR11361">
    <property type="entry name" value="DNA MISMATCH REPAIR PROTEIN MUTS FAMILY MEMBER"/>
    <property type="match status" value="1"/>
</dbReference>
<dbReference type="Pfam" id="PF01624">
    <property type="entry name" value="MutS_I"/>
    <property type="match status" value="1"/>
</dbReference>
<dbReference type="Pfam" id="PF05188">
    <property type="entry name" value="MutS_II"/>
    <property type="match status" value="1"/>
</dbReference>
<dbReference type="Pfam" id="PF05192">
    <property type="entry name" value="MutS_III"/>
    <property type="match status" value="1"/>
</dbReference>
<dbReference type="Pfam" id="PF05190">
    <property type="entry name" value="MutS_IV"/>
    <property type="match status" value="1"/>
</dbReference>
<dbReference type="Pfam" id="PF00488">
    <property type="entry name" value="MutS_V"/>
    <property type="match status" value="1"/>
</dbReference>
<dbReference type="PIRSF" id="PIRSF037677">
    <property type="entry name" value="DNA_mis_repair_Msh6"/>
    <property type="match status" value="1"/>
</dbReference>
<dbReference type="SMART" id="SM00534">
    <property type="entry name" value="MUTSac"/>
    <property type="match status" value="1"/>
</dbReference>
<dbReference type="SMART" id="SM00533">
    <property type="entry name" value="MUTSd"/>
    <property type="match status" value="1"/>
</dbReference>
<dbReference type="SUPFAM" id="SSF55271">
    <property type="entry name" value="DNA repair protein MutS, domain I"/>
    <property type="match status" value="1"/>
</dbReference>
<dbReference type="SUPFAM" id="SSF53150">
    <property type="entry name" value="DNA repair protein MutS, domain II"/>
    <property type="match status" value="1"/>
</dbReference>
<dbReference type="SUPFAM" id="SSF48334">
    <property type="entry name" value="DNA repair protein MutS, domain III"/>
    <property type="match status" value="1"/>
</dbReference>
<dbReference type="SUPFAM" id="SSF52540">
    <property type="entry name" value="P-loop containing nucleoside triphosphate hydrolases"/>
    <property type="match status" value="1"/>
</dbReference>
<dbReference type="PROSITE" id="PS00486">
    <property type="entry name" value="DNA_MISMATCH_REPAIR_2"/>
    <property type="match status" value="1"/>
</dbReference>
<name>MUTS_PARXL</name>
<protein>
    <recommendedName>
        <fullName evidence="1">DNA mismatch repair protein MutS</fullName>
    </recommendedName>
</protein>
<reference key="1">
    <citation type="journal article" date="2006" name="Proc. Natl. Acad. Sci. U.S.A.">
        <title>Burkholderia xenovorans LB400 harbors a multi-replicon, 9.73-Mbp genome shaped for versatility.</title>
        <authorList>
            <person name="Chain P.S.G."/>
            <person name="Denef V.J."/>
            <person name="Konstantinidis K.T."/>
            <person name="Vergez L.M."/>
            <person name="Agullo L."/>
            <person name="Reyes V.L."/>
            <person name="Hauser L."/>
            <person name="Cordova M."/>
            <person name="Gomez L."/>
            <person name="Gonzalez M."/>
            <person name="Land M."/>
            <person name="Lao V."/>
            <person name="Larimer F."/>
            <person name="LiPuma J.J."/>
            <person name="Mahenthiralingam E."/>
            <person name="Malfatti S.A."/>
            <person name="Marx C.J."/>
            <person name="Parnell J.J."/>
            <person name="Ramette A."/>
            <person name="Richardson P."/>
            <person name="Seeger M."/>
            <person name="Smith D."/>
            <person name="Spilker T."/>
            <person name="Sul W.J."/>
            <person name="Tsoi T.V."/>
            <person name="Ulrich L.E."/>
            <person name="Zhulin I.B."/>
            <person name="Tiedje J.M."/>
        </authorList>
    </citation>
    <scope>NUCLEOTIDE SEQUENCE [LARGE SCALE GENOMIC DNA]</scope>
    <source>
        <strain>LB400</strain>
    </source>
</reference>
<accession>Q13X51</accession>
<sequence length="894" mass="97069">MGIQTATASDVAQHTPMMQQYLRIKAEHPGTLVFYRMGDFYELFFEDAEKAARLLDLTLTQRGASAGNPIKMAGVPHHAVEQYLAKLVKLGESVAICEQIGDPATSKGPVERKVVRVVTPGTLTDAALLSDKNDVYLLAMCVAHNRRGVATSVGLAWLNLASGALRLAELAPDQVAAALERIRPAEVLVADTPGDAASWTPPVNAGALTRVPVWHFDIASGTQRLCDQLEVAGLDGFGAHSLTCAWGAAGALLLYAAATQGQQLRHVRSLKVEYESEYIGLDPATRRNLELTETLRGTESPTLCSLLDTCCTTMGSRLLRHWLHHPPRESAVAQARQQAIGALLEAPPGAGVDSLRGALRQISDIERITGRLALLSARPRDLSSLRDTFIALPELRAQLAAVSPNADSLARIDASLEPPQACVELLRRAVAEEPSAMVRDGGVIARGYDAELDELRDISENCGQFLIDLETRERARTGIGNLRVEYNKVHGFYIEVTRGQTDKVPDDYRRRQTLKNAERYITPELKTFEDKALSAQERALARERSLYDALLQALLPFIPDCQRVASALAELDLLAAFGERARALDWVAPTFSPDAGIEIEQGRHPVVEAQVEQFIANDCSLTPERKLLLITGPNMGGKSTFMRQTALIALLAYVGSYVPARRAAFGPIDRIFTRIGAADDLAGGRSTFMVEMTEAAAILNDATPQSLVLMDEIGRGTSTFDGLALAWAIARHLLAHNGCHTLFATHYFELTQLPAEFPQAANVHLSAVEHGHGIVFLHAVSEGPANQSYGLQVAQLAGVPNAVIRAARKHLAYLEQQSAAQPAPQLDLFAAPMPMLLEDADDERDSKAEALVPPAMQALVERLRGIDPNDLRPREALDLLYELHELAAAPDADH</sequence>
<comment type="function">
    <text evidence="1">This protein is involved in the repair of mismatches in DNA. It is possible that it carries out the mismatch recognition step. This protein has a weak ATPase activity.</text>
</comment>
<comment type="similarity">
    <text evidence="1">Belongs to the DNA mismatch repair MutS family.</text>
</comment>
<comment type="sequence caution" evidence="2">
    <conflict type="erroneous initiation">
        <sequence resource="EMBL-CDS" id="ABE31338"/>
    </conflict>
</comment>
<gene>
    <name evidence="1" type="primary">mutS</name>
    <name type="ordered locus">Bxeno_A2800</name>
    <name type="ORF">Bxe_A1617</name>
</gene>
<feature type="chain" id="PRO_0000335132" description="DNA mismatch repair protein MutS">
    <location>
        <begin position="1"/>
        <end position="894"/>
    </location>
</feature>
<feature type="binding site" evidence="1">
    <location>
        <begin position="632"/>
        <end position="639"/>
    </location>
    <ligand>
        <name>ATP</name>
        <dbReference type="ChEBI" id="CHEBI:30616"/>
    </ligand>
</feature>
<organism>
    <name type="scientific">Paraburkholderia xenovorans (strain LB400)</name>
    <dbReference type="NCBI Taxonomy" id="266265"/>
    <lineage>
        <taxon>Bacteria</taxon>
        <taxon>Pseudomonadati</taxon>
        <taxon>Pseudomonadota</taxon>
        <taxon>Betaproteobacteria</taxon>
        <taxon>Burkholderiales</taxon>
        <taxon>Burkholderiaceae</taxon>
        <taxon>Paraburkholderia</taxon>
    </lineage>
</organism>